<protein>
    <recommendedName>
        <fullName evidence="4">dTDP-4-dehydrorhamnose reductase</fullName>
        <ecNumber evidence="2">1.1.1.133</ecNumber>
    </recommendedName>
    <alternativeName>
        <fullName evidence="4">dTDP-4-keto-L-rhamnose reductase</fullName>
    </alternativeName>
    <alternativeName>
        <fullName evidence="3">dTDP-6-deoxy-L-lyxo-4-hexulose reductase</fullName>
    </alternativeName>
    <alternativeName>
        <fullName evidence="4">dTDP-6-deoxy-L-mannose dehydrogenase</fullName>
    </alternativeName>
    <alternativeName>
        <fullName evidence="4">dTDP-L-rhamnose synthase</fullName>
    </alternativeName>
</protein>
<name>RMLD_SALTY</name>
<organism>
    <name type="scientific">Salmonella typhimurium (strain LT2 / SGSC1412 / ATCC 700720)</name>
    <dbReference type="NCBI Taxonomy" id="99287"/>
    <lineage>
        <taxon>Bacteria</taxon>
        <taxon>Pseudomonadati</taxon>
        <taxon>Pseudomonadota</taxon>
        <taxon>Gammaproteobacteria</taxon>
        <taxon>Enterobacterales</taxon>
        <taxon>Enterobacteriaceae</taxon>
        <taxon>Salmonella</taxon>
    </lineage>
</organism>
<comment type="function">
    <text evidence="2">Involved in the biosynthesis of the dTDP-L-rhamnose which is an important component of lipopolysaccharide (LPS). Catalyzes the reduction of dTDP-6-deoxy-L-lyxo-4-hexulose to yield dTDP-L-rhamnose. RmlD uses NADH and NADPH nearly equally well.</text>
</comment>
<comment type="catalytic activity">
    <reaction evidence="2">
        <text>dTDP-beta-L-rhamnose + NADP(+) = dTDP-4-dehydro-beta-L-rhamnose + NADPH + H(+)</text>
        <dbReference type="Rhea" id="RHEA:21796"/>
        <dbReference type="ChEBI" id="CHEBI:15378"/>
        <dbReference type="ChEBI" id="CHEBI:57510"/>
        <dbReference type="ChEBI" id="CHEBI:57783"/>
        <dbReference type="ChEBI" id="CHEBI:58349"/>
        <dbReference type="ChEBI" id="CHEBI:62830"/>
        <dbReference type="EC" id="1.1.1.133"/>
    </reaction>
</comment>
<comment type="cofactor">
    <cofactor evidence="2">
        <name>Mg(2+)</name>
        <dbReference type="ChEBI" id="CHEBI:18420"/>
    </cofactor>
    <text evidence="2">Binds 1 Mg(2+) ion per monomer. Mg(2+) is important for dimerization.</text>
</comment>
<comment type="biophysicochemical properties">
    <kinetics>
        <KM evidence="2">0.11 mM for dTDP-6-deoxy-L-mannose (at pH 6.5)</KM>
    </kinetics>
</comment>
<comment type="pathway">
    <text evidence="1">Carbohydrate biosynthesis; dTDP-L-rhamnose biosynthesis.</text>
</comment>
<comment type="pathway">
    <text evidence="1">Bacterial outer membrane biogenesis; LPS O-antigen biosynthesis.</text>
</comment>
<comment type="subunit">
    <text evidence="2">Homodimer.</text>
</comment>
<comment type="similarity">
    <text evidence="4">Belongs to the dTDP-4-dehydrorhamnose reductase family.</text>
</comment>
<reference key="1">
    <citation type="journal article" date="1991" name="Mol. Microbiol.">
        <title>Structure and sequence of the rfb (O antigen) gene cluster of Salmonella serovar typhimurium (strain LT2).</title>
        <authorList>
            <person name="Jiang X.-M."/>
            <person name="Neal B."/>
            <person name="Santiago F."/>
            <person name="Lee S.J."/>
            <person name="Romana L.K."/>
            <person name="Reeves P.R."/>
        </authorList>
    </citation>
    <scope>NUCLEOTIDE SEQUENCE [GENOMIC DNA]</scope>
    <source>
        <strain>LT2</strain>
    </source>
</reference>
<reference key="2">
    <citation type="journal article" date="2001" name="Nature">
        <title>Complete genome sequence of Salmonella enterica serovar Typhimurium LT2.</title>
        <authorList>
            <person name="McClelland M."/>
            <person name="Sanderson K.E."/>
            <person name="Spieth J."/>
            <person name="Clifton S.W."/>
            <person name="Latreille P."/>
            <person name="Courtney L."/>
            <person name="Porwollik S."/>
            <person name="Ali J."/>
            <person name="Dante M."/>
            <person name="Du F."/>
            <person name="Hou S."/>
            <person name="Layman D."/>
            <person name="Leonard S."/>
            <person name="Nguyen C."/>
            <person name="Scott K."/>
            <person name="Holmes A."/>
            <person name="Grewal N."/>
            <person name="Mulvaney E."/>
            <person name="Ryan E."/>
            <person name="Sun H."/>
            <person name="Florea L."/>
            <person name="Miller W."/>
            <person name="Stoneking T."/>
            <person name="Nhan M."/>
            <person name="Waterston R."/>
            <person name="Wilson R.K."/>
        </authorList>
    </citation>
    <scope>NUCLEOTIDE SEQUENCE [LARGE SCALE GENOMIC DNA]</scope>
    <source>
        <strain>LT2 / SGSC1412 / ATCC 700720</strain>
    </source>
</reference>
<reference evidence="6 7 8 9" key="3">
    <citation type="journal article" date="2002" name="Structure">
        <title>Variation on a theme of SDR. dTDP-6-deoxy-L- lyxo-4-hexulose reductase (RmlD) shows a new Mg2+-dependent dimerization mode.</title>
        <authorList>
            <person name="Blankenfeldt W."/>
            <person name="Kerr I.D."/>
            <person name="Giraud M.F."/>
            <person name="McMiken H.J."/>
            <person name="Leonard G."/>
            <person name="Whitfield C."/>
            <person name="Messner P."/>
            <person name="Graninger M."/>
            <person name="Naismith J.H."/>
        </authorList>
    </citation>
    <scope>X-RAY CRYSTALLOGRAPHY (2.0 ANGSTROMS) IN COMPLEXES WITH NADH</scope>
    <scope>NADPH AND DTDP-L-RHAMNOSE</scope>
    <scope>FUNCTION IN DTDP-RHAMNOSE BIOSYNTHESIS</scope>
    <scope>CATALYTIC ACTIVITY</scope>
    <scope>BIOPHYSICOCHEMICAL PROPERTIES</scope>
    <scope>MUTAGENESIS OF VAL-67; ASP-68; THR-104; TYR-128 AND TRP-153</scope>
    <scope>COFACTOR</scope>
    <scope>ACTIVE SITE</scope>
    <scope>REACTION MECHANISM</scope>
    <scope>SUBUNIT</scope>
</reference>
<sequence>MNILLFGKTGQVGWELQRSLAPVGNLIALDVHSKEFCGDFSNPKGVAETVRKLRPDVIVNAAAHTAVDKAESEPELAQLLNATSVEAIAKAANETGAWVVHYSTDYVFPGTGDIPWQETDATSPLNVYGKTKLAGEKALQDNCPKHLIFRTSWVYAGKGNNFAKTMLRLAKERQTLSVINDQYGAPTGAELLADCTAHAIRVALNKPEVAGLYHLVAGGTTTWHDYAALVFDEARKAGITLALTELNAVPTSAYPTPASRPGNSRLNTEKFQRNFDLILPQWELGVKRMLTEMFTTTTI</sequence>
<feature type="chain" id="PRO_0000207986" description="dTDP-4-dehydrorhamnose reductase">
    <location>
        <begin position="1"/>
        <end position="299"/>
    </location>
</feature>
<feature type="active site" description="Proton donor/acceptor" evidence="2">
    <location>
        <position position="128"/>
    </location>
</feature>
<feature type="binding site" evidence="2 9">
    <location>
        <begin position="10"/>
        <end position="12"/>
    </location>
    <ligand>
        <name>NADH</name>
        <dbReference type="ChEBI" id="CHEBI:57945"/>
    </ligand>
</feature>
<feature type="binding site" evidence="2 7">
    <location>
        <begin position="11"/>
        <end position="12"/>
    </location>
    <ligand>
        <name>NADPH</name>
        <dbReference type="ChEBI" id="CHEBI:57783"/>
    </ligand>
</feature>
<feature type="binding site" evidence="2 9">
    <location>
        <position position="30"/>
    </location>
    <ligand>
        <name>NADH</name>
        <dbReference type="ChEBI" id="CHEBI:57945"/>
    </ligand>
</feature>
<feature type="binding site" evidence="2 9">
    <location>
        <begin position="39"/>
        <end position="40"/>
    </location>
    <ligand>
        <name>NADH</name>
        <dbReference type="ChEBI" id="CHEBI:57945"/>
    </ligand>
</feature>
<feature type="binding site" evidence="2 7">
    <location>
        <begin position="39"/>
        <end position="40"/>
    </location>
    <ligand>
        <name>NADPH</name>
        <dbReference type="ChEBI" id="CHEBI:57783"/>
    </ligand>
</feature>
<feature type="binding site" evidence="2 9">
    <location>
        <begin position="63"/>
        <end position="65"/>
    </location>
    <ligand>
        <name>NADH</name>
        <dbReference type="ChEBI" id="CHEBI:57945"/>
    </ligand>
</feature>
<feature type="binding site" evidence="2 7">
    <location>
        <begin position="63"/>
        <end position="65"/>
    </location>
    <ligand>
        <name>NADPH</name>
        <dbReference type="ChEBI" id="CHEBI:57783"/>
    </ligand>
</feature>
<feature type="binding site" evidence="2 7">
    <location>
        <position position="102"/>
    </location>
    <ligand>
        <name>NADPH</name>
        <dbReference type="ChEBI" id="CHEBI:57783"/>
    </ligand>
</feature>
<feature type="binding site" evidence="2 8">
    <location>
        <begin position="104"/>
        <end position="105"/>
    </location>
    <ligand>
        <name>dTDP-beta-L-rhamnose</name>
        <dbReference type="ChEBI" id="CHEBI:57510"/>
    </ligand>
</feature>
<feature type="binding site" evidence="2 9">
    <location>
        <position position="128"/>
    </location>
    <ligand>
        <name>NADH</name>
        <dbReference type="ChEBI" id="CHEBI:57945"/>
    </ligand>
</feature>
<feature type="binding site" evidence="2 7">
    <location>
        <position position="128"/>
    </location>
    <ligand>
        <name>NADPH</name>
        <dbReference type="ChEBI" id="CHEBI:57783"/>
    </ligand>
</feature>
<feature type="binding site" evidence="2 9">
    <location>
        <position position="132"/>
    </location>
    <ligand>
        <name>NADH</name>
        <dbReference type="ChEBI" id="CHEBI:57945"/>
    </ligand>
</feature>
<feature type="binding site" evidence="2 7">
    <location>
        <position position="132"/>
    </location>
    <ligand>
        <name>NADPH</name>
        <dbReference type="ChEBI" id="CHEBI:57783"/>
    </ligand>
</feature>
<feature type="binding site" evidence="2 8">
    <location>
        <position position="153"/>
    </location>
    <ligand>
        <name>dTDP-beta-L-rhamnose</name>
        <dbReference type="ChEBI" id="CHEBI:57510"/>
    </ligand>
</feature>
<feature type="site" description="Could provide a fine-tuning to achieve optimal pKa matching between active site and substrate" evidence="5">
    <location>
        <position position="104"/>
    </location>
</feature>
<feature type="mutagenesis site" description="Significantly reduces enzyme activity." evidence="2">
    <original>V</original>
    <variation>A</variation>
    <location>
        <position position="67"/>
    </location>
</feature>
<feature type="mutagenesis site" description="Slightly reduces enzyme activity." evidence="2">
    <original>D</original>
    <variation>A</variation>
    <location>
        <position position="68"/>
    </location>
</feature>
<feature type="mutagenesis site" description="Loss of activity." evidence="2">
    <original>T</original>
    <variation>A</variation>
    <location>
        <position position="104"/>
    </location>
</feature>
<feature type="mutagenesis site" description="Loss of activity." evidence="2">
    <original>Y</original>
    <variation>F</variation>
    <location>
        <position position="128"/>
    </location>
</feature>
<feature type="mutagenesis site" description="Loss of activity." evidence="2">
    <original>W</original>
    <variation>A</variation>
    <location>
        <position position="153"/>
    </location>
</feature>
<feature type="strand" evidence="12">
    <location>
        <begin position="2"/>
        <end position="6"/>
    </location>
</feature>
<feature type="helix" evidence="12">
    <location>
        <begin position="11"/>
        <end position="19"/>
    </location>
</feature>
<feature type="turn" evidence="12">
    <location>
        <begin position="20"/>
        <end position="23"/>
    </location>
</feature>
<feature type="strand" evidence="12">
    <location>
        <begin position="24"/>
        <end position="29"/>
    </location>
</feature>
<feature type="strand" evidence="12">
    <location>
        <begin position="34"/>
        <end position="36"/>
    </location>
</feature>
<feature type="helix" evidence="12">
    <location>
        <begin position="43"/>
        <end position="53"/>
    </location>
</feature>
<feature type="strand" evidence="12">
    <location>
        <begin position="56"/>
        <end position="60"/>
    </location>
</feature>
<feature type="helix" evidence="12">
    <location>
        <begin position="67"/>
        <end position="70"/>
    </location>
</feature>
<feature type="helix" evidence="12">
    <location>
        <begin position="74"/>
        <end position="81"/>
    </location>
</feature>
<feature type="helix" evidence="12">
    <location>
        <begin position="83"/>
        <end position="92"/>
    </location>
</feature>
<feature type="turn" evidence="12">
    <location>
        <begin position="93"/>
        <end position="96"/>
    </location>
</feature>
<feature type="strand" evidence="12">
    <location>
        <begin position="98"/>
        <end position="104"/>
    </location>
</feature>
<feature type="helix" evidence="12">
    <location>
        <begin position="105"/>
        <end position="107"/>
    </location>
</feature>
<feature type="strand" evidence="10">
    <location>
        <begin position="112"/>
        <end position="114"/>
    </location>
</feature>
<feature type="helix" evidence="12">
    <location>
        <begin position="127"/>
        <end position="142"/>
    </location>
</feature>
<feature type="strand" evidence="12">
    <location>
        <begin position="144"/>
        <end position="151"/>
    </location>
</feature>
<feature type="strand" evidence="12">
    <location>
        <begin position="153"/>
        <end position="155"/>
    </location>
</feature>
<feature type="strand" evidence="12">
    <location>
        <begin position="157"/>
        <end position="159"/>
    </location>
</feature>
<feature type="helix" evidence="12">
    <location>
        <begin position="162"/>
        <end position="172"/>
    </location>
</feature>
<feature type="strand" evidence="12">
    <location>
        <begin position="174"/>
        <end position="179"/>
    </location>
</feature>
<feature type="helix" evidence="12">
    <location>
        <begin position="189"/>
        <end position="205"/>
    </location>
</feature>
<feature type="helix" evidence="12">
    <location>
        <begin position="207"/>
        <end position="209"/>
    </location>
</feature>
<feature type="strand" evidence="12">
    <location>
        <begin position="211"/>
        <end position="214"/>
    </location>
</feature>
<feature type="helix" evidence="12">
    <location>
        <begin position="223"/>
        <end position="237"/>
    </location>
</feature>
<feature type="strand" evidence="12">
    <location>
        <begin position="245"/>
        <end position="249"/>
    </location>
</feature>
<feature type="helix" evidence="11">
    <location>
        <begin position="251"/>
        <end position="253"/>
    </location>
</feature>
<feature type="strand" evidence="11">
    <location>
        <begin position="262"/>
        <end position="264"/>
    </location>
</feature>
<feature type="helix" evidence="12">
    <location>
        <begin position="269"/>
        <end position="275"/>
    </location>
</feature>
<feature type="helix" evidence="12">
    <location>
        <begin position="282"/>
        <end position="294"/>
    </location>
</feature>
<gene>
    <name type="primary">rfbD</name>
    <name type="synonym">rmlD</name>
    <name type="ordered locus">STM2096</name>
</gene>
<proteinExistence type="evidence at protein level"/>
<accession>P26392</accession>
<keyword id="KW-0002">3D-structure</keyword>
<keyword id="KW-0119">Carbohydrate metabolism</keyword>
<keyword id="KW-0448">Lipopolysaccharide biosynthesis</keyword>
<keyword id="KW-0460">Magnesium</keyword>
<keyword id="KW-0479">Metal-binding</keyword>
<keyword id="KW-0520">NAD</keyword>
<keyword id="KW-0521">NADP</keyword>
<keyword id="KW-0560">Oxidoreductase</keyword>
<keyword id="KW-1185">Reference proteome</keyword>
<dbReference type="EC" id="1.1.1.133" evidence="2"/>
<dbReference type="EMBL" id="X56793">
    <property type="protein sequence ID" value="CAA40116.1"/>
    <property type="molecule type" value="Genomic_DNA"/>
</dbReference>
<dbReference type="EMBL" id="AE006468">
    <property type="protein sequence ID" value="AAL21000.1"/>
    <property type="molecule type" value="Genomic_DNA"/>
</dbReference>
<dbReference type="PIR" id="S15300">
    <property type="entry name" value="S15300"/>
</dbReference>
<dbReference type="RefSeq" id="NP_461041.1">
    <property type="nucleotide sequence ID" value="NC_003197.2"/>
</dbReference>
<dbReference type="RefSeq" id="WP_001023662.1">
    <property type="nucleotide sequence ID" value="NC_003197.2"/>
</dbReference>
<dbReference type="PDB" id="1KBZ">
    <property type="method" value="X-ray"/>
    <property type="resolution" value="2.20 A"/>
    <property type="chains" value="A=1-299"/>
</dbReference>
<dbReference type="PDB" id="1KC1">
    <property type="method" value="X-ray"/>
    <property type="resolution" value="2.60 A"/>
    <property type="chains" value="A=1-299"/>
</dbReference>
<dbReference type="PDB" id="1KC3">
    <property type="method" value="X-ray"/>
    <property type="resolution" value="2.70 A"/>
    <property type="chains" value="A=1-299"/>
</dbReference>
<dbReference type="PDB" id="1N2S">
    <property type="method" value="X-ray"/>
    <property type="resolution" value="2.00 A"/>
    <property type="chains" value="A=1-299"/>
</dbReference>
<dbReference type="PDBsum" id="1KBZ"/>
<dbReference type="PDBsum" id="1KC1"/>
<dbReference type="PDBsum" id="1KC3"/>
<dbReference type="PDBsum" id="1N2S"/>
<dbReference type="SMR" id="P26392"/>
<dbReference type="STRING" id="99287.STM2096"/>
<dbReference type="DrugBank" id="DB03723">
    <property type="generic name" value="2'-Deoxy-thymidine-beta-L-rhamnose"/>
</dbReference>
<dbReference type="PaxDb" id="99287-STM2096"/>
<dbReference type="GeneID" id="1253617"/>
<dbReference type="KEGG" id="stm:STM2096"/>
<dbReference type="PATRIC" id="fig|99287.12.peg.2218"/>
<dbReference type="HOGENOM" id="CLU_045518_1_2_6"/>
<dbReference type="OMA" id="IRTAWVY"/>
<dbReference type="PhylomeDB" id="P26392"/>
<dbReference type="BioCyc" id="SENT99287:STM2096-MONOMER"/>
<dbReference type="SABIO-RK" id="P26392"/>
<dbReference type="UniPathway" id="UPA00124"/>
<dbReference type="UniPathway" id="UPA00281"/>
<dbReference type="EvolutionaryTrace" id="P26392"/>
<dbReference type="Proteomes" id="UP000001014">
    <property type="component" value="Chromosome"/>
</dbReference>
<dbReference type="GO" id="GO:0005829">
    <property type="term" value="C:cytosol"/>
    <property type="evidence" value="ECO:0000318"/>
    <property type="project" value="GO_Central"/>
</dbReference>
<dbReference type="GO" id="GO:0008831">
    <property type="term" value="F:dTDP-4-dehydrorhamnose reductase activity"/>
    <property type="evidence" value="ECO:0000314"/>
    <property type="project" value="UniProtKB"/>
</dbReference>
<dbReference type="GO" id="GO:0046872">
    <property type="term" value="F:metal ion binding"/>
    <property type="evidence" value="ECO:0007669"/>
    <property type="project" value="UniProtKB-KW"/>
</dbReference>
<dbReference type="GO" id="GO:0019305">
    <property type="term" value="P:dTDP-rhamnose biosynthetic process"/>
    <property type="evidence" value="ECO:0000318"/>
    <property type="project" value="GO_Central"/>
</dbReference>
<dbReference type="GO" id="GO:0009103">
    <property type="term" value="P:lipopolysaccharide biosynthetic process"/>
    <property type="evidence" value="ECO:0000314"/>
    <property type="project" value="UniProtKB"/>
</dbReference>
<dbReference type="GO" id="GO:0009243">
    <property type="term" value="P:O antigen biosynthetic process"/>
    <property type="evidence" value="ECO:0007669"/>
    <property type="project" value="UniProtKB-UniPathway"/>
</dbReference>
<dbReference type="GO" id="GO:0000271">
    <property type="term" value="P:polysaccharide biosynthetic process"/>
    <property type="evidence" value="ECO:0000314"/>
    <property type="project" value="UniProtKB"/>
</dbReference>
<dbReference type="CDD" id="cd05254">
    <property type="entry name" value="dTDP_HR_like_SDR_e"/>
    <property type="match status" value="1"/>
</dbReference>
<dbReference type="Gene3D" id="3.40.50.720">
    <property type="entry name" value="NAD(P)-binding Rossmann-like Domain"/>
    <property type="match status" value="1"/>
</dbReference>
<dbReference type="Gene3D" id="3.90.25.10">
    <property type="entry name" value="UDP-galactose 4-epimerase, domain 1"/>
    <property type="match status" value="1"/>
</dbReference>
<dbReference type="InterPro" id="IPR005913">
    <property type="entry name" value="dTDP_dehydrorham_reduct"/>
</dbReference>
<dbReference type="InterPro" id="IPR036291">
    <property type="entry name" value="NAD(P)-bd_dom_sf"/>
</dbReference>
<dbReference type="InterPro" id="IPR029903">
    <property type="entry name" value="RmlD-like-bd"/>
</dbReference>
<dbReference type="NCBIfam" id="NF007440">
    <property type="entry name" value="PRK09987.1"/>
    <property type="match status" value="1"/>
</dbReference>
<dbReference type="NCBIfam" id="TIGR01214">
    <property type="entry name" value="rmlD"/>
    <property type="match status" value="1"/>
</dbReference>
<dbReference type="PANTHER" id="PTHR10491">
    <property type="entry name" value="DTDP-4-DEHYDRORHAMNOSE REDUCTASE"/>
    <property type="match status" value="1"/>
</dbReference>
<dbReference type="PANTHER" id="PTHR10491:SF4">
    <property type="entry name" value="METHIONINE ADENOSYLTRANSFERASE 2 SUBUNIT BETA"/>
    <property type="match status" value="1"/>
</dbReference>
<dbReference type="Pfam" id="PF04321">
    <property type="entry name" value="RmlD_sub_bind"/>
    <property type="match status" value="1"/>
</dbReference>
<dbReference type="SUPFAM" id="SSF51735">
    <property type="entry name" value="NAD(P)-binding Rossmann-fold domains"/>
    <property type="match status" value="1"/>
</dbReference>
<evidence type="ECO:0000250" key="1">
    <source>
        <dbReference type="UniProtKB" id="P37760"/>
    </source>
</evidence>
<evidence type="ECO:0000269" key="2">
    <source>
    </source>
</evidence>
<evidence type="ECO:0000303" key="3">
    <source>
    </source>
</evidence>
<evidence type="ECO:0000305" key="4"/>
<evidence type="ECO:0000305" key="5">
    <source>
    </source>
</evidence>
<evidence type="ECO:0007744" key="6">
    <source>
        <dbReference type="PDB" id="1KBZ"/>
    </source>
</evidence>
<evidence type="ECO:0007744" key="7">
    <source>
        <dbReference type="PDB" id="1KC1"/>
    </source>
</evidence>
<evidence type="ECO:0007744" key="8">
    <source>
        <dbReference type="PDB" id="1KC3"/>
    </source>
</evidence>
<evidence type="ECO:0007744" key="9">
    <source>
        <dbReference type="PDB" id="1N2S"/>
    </source>
</evidence>
<evidence type="ECO:0007829" key="10">
    <source>
        <dbReference type="PDB" id="1KC1"/>
    </source>
</evidence>
<evidence type="ECO:0007829" key="11">
    <source>
        <dbReference type="PDB" id="1KC3"/>
    </source>
</evidence>
<evidence type="ECO:0007829" key="12">
    <source>
        <dbReference type="PDB" id="1N2S"/>
    </source>
</evidence>